<reference key="1">
    <citation type="journal article" date="2008" name="BMC Evol. Biol.">
        <title>Molecular evolution of the cytochrome c oxidase subunit 5A gene in primates.</title>
        <authorList>
            <person name="Uddin M."/>
            <person name="Opazo J.C."/>
            <person name="Wildman D.E."/>
            <person name="Sherwood C.C."/>
            <person name="Hof P.R."/>
            <person name="Goodman M."/>
            <person name="Grossman L.I."/>
        </authorList>
    </citation>
    <scope>NUCLEOTIDE SEQUENCE [MRNA]</scope>
</reference>
<organism>
    <name type="scientific">Papio anubis</name>
    <name type="common">Olive baboon</name>
    <dbReference type="NCBI Taxonomy" id="9555"/>
    <lineage>
        <taxon>Eukaryota</taxon>
        <taxon>Metazoa</taxon>
        <taxon>Chordata</taxon>
        <taxon>Craniata</taxon>
        <taxon>Vertebrata</taxon>
        <taxon>Euteleostomi</taxon>
        <taxon>Mammalia</taxon>
        <taxon>Eutheria</taxon>
        <taxon>Euarchontoglires</taxon>
        <taxon>Primates</taxon>
        <taxon>Haplorrhini</taxon>
        <taxon>Catarrhini</taxon>
        <taxon>Cercopithecidae</taxon>
        <taxon>Cercopithecinae</taxon>
        <taxon>Papio</taxon>
    </lineage>
</organism>
<gene>
    <name type="primary">COX5A</name>
</gene>
<name>COX5A_PAPAN</name>
<feature type="transit peptide" description="Mitochondrion" evidence="1">
    <location>
        <begin position="1"/>
        <end position="41"/>
    </location>
</feature>
<feature type="chain" id="PRO_0000355988" description="Cytochrome c oxidase subunit 5A, mitochondrial">
    <location>
        <begin position="42"/>
        <end position="150"/>
    </location>
</feature>
<feature type="short sequence motif" description="SIFI-degron" evidence="4">
    <location>
        <begin position="2"/>
        <end position="17"/>
    </location>
</feature>
<feature type="modified residue" description="N6-acetyllysine" evidence="3">
    <location>
        <position position="87"/>
    </location>
</feature>
<feature type="modified residue" description="N6-acetyllysine" evidence="3">
    <location>
        <position position="113"/>
    </location>
</feature>
<feature type="modified residue" description="Phosphothreonine" evidence="4">
    <location>
        <position position="141"/>
    </location>
</feature>
<protein>
    <recommendedName>
        <fullName>Cytochrome c oxidase subunit 5A, mitochondrial</fullName>
    </recommendedName>
    <alternativeName>
        <fullName>Cytochrome c oxidase polypeptide Va</fullName>
    </alternativeName>
</protein>
<proteinExistence type="evidence at transcript level"/>
<evidence type="ECO:0000250" key="1">
    <source>
        <dbReference type="UniProtKB" id="P00426"/>
    </source>
</evidence>
<evidence type="ECO:0000250" key="2">
    <source>
        <dbReference type="UniProtKB" id="P00427"/>
    </source>
</evidence>
<evidence type="ECO:0000250" key="3">
    <source>
        <dbReference type="UniProtKB" id="P12787"/>
    </source>
</evidence>
<evidence type="ECO:0000250" key="4">
    <source>
        <dbReference type="UniProtKB" id="P20674"/>
    </source>
</evidence>
<evidence type="ECO:0000305" key="5"/>
<dbReference type="EMBL" id="DQ987245">
    <property type="protein sequence ID" value="ABK92292.1"/>
    <property type="molecule type" value="mRNA"/>
</dbReference>
<dbReference type="RefSeq" id="NP_001266444.1">
    <property type="nucleotide sequence ID" value="NM_001279515.1"/>
</dbReference>
<dbReference type="RefSeq" id="XP_009208914.1">
    <property type="nucleotide sequence ID" value="XM_009210650.1"/>
</dbReference>
<dbReference type="SMR" id="B0VYX8"/>
<dbReference type="STRING" id="9555.ENSPANP00000034446"/>
<dbReference type="Ensembl" id="ENSPANT00000026792.3">
    <property type="protein sequence ID" value="ENSPANP00000039294.2"/>
    <property type="gene ID" value="ENSPANG00000015978.3"/>
</dbReference>
<dbReference type="GeneID" id="101006649"/>
<dbReference type="KEGG" id="panu:101006649"/>
<dbReference type="CTD" id="9377"/>
<dbReference type="eggNOG" id="KOG4077">
    <property type="taxonomic scope" value="Eukaryota"/>
</dbReference>
<dbReference type="GeneTree" id="ENSGT00390000001424"/>
<dbReference type="HOGENOM" id="CLU_099086_2_1_1"/>
<dbReference type="OMA" id="MEKWPAD"/>
<dbReference type="UniPathway" id="UPA00705"/>
<dbReference type="Proteomes" id="UP000028761">
    <property type="component" value="Chromosome 7"/>
</dbReference>
<dbReference type="Bgee" id="ENSPANG00000015978">
    <property type="expression patterns" value="Expressed in heart and 66 other cell types or tissues"/>
</dbReference>
<dbReference type="ExpressionAtlas" id="B0VYX8">
    <property type="expression patterns" value="baseline"/>
</dbReference>
<dbReference type="GO" id="GO:0005743">
    <property type="term" value="C:mitochondrial inner membrane"/>
    <property type="evidence" value="ECO:0007669"/>
    <property type="project" value="UniProtKB-SubCell"/>
</dbReference>
<dbReference type="GO" id="GO:0045277">
    <property type="term" value="C:respiratory chain complex IV"/>
    <property type="evidence" value="ECO:0007669"/>
    <property type="project" value="InterPro"/>
</dbReference>
<dbReference type="GO" id="GO:0046872">
    <property type="term" value="F:metal ion binding"/>
    <property type="evidence" value="ECO:0007669"/>
    <property type="project" value="UniProtKB-KW"/>
</dbReference>
<dbReference type="GO" id="GO:0006123">
    <property type="term" value="P:mitochondrial electron transport, cytochrome c to oxygen"/>
    <property type="evidence" value="ECO:0007669"/>
    <property type="project" value="InterPro"/>
</dbReference>
<dbReference type="CDD" id="cd00923">
    <property type="entry name" value="Cyt_c_Oxidase_Va"/>
    <property type="match status" value="1"/>
</dbReference>
<dbReference type="FunFam" id="1.25.40.40:FF:000002">
    <property type="entry name" value="cytochrome c oxidase subunit 5A, mitochondrial"/>
    <property type="match status" value="1"/>
</dbReference>
<dbReference type="Gene3D" id="1.25.40.40">
    <property type="entry name" value="Cytochrome c oxidase, subunit Va/VI"/>
    <property type="match status" value="1"/>
</dbReference>
<dbReference type="InterPro" id="IPR003204">
    <property type="entry name" value="Cyt_c_oxidase_su5A/6"/>
</dbReference>
<dbReference type="InterPro" id="IPR036545">
    <property type="entry name" value="Cyt_c_oxidase_su5A/6_sf"/>
</dbReference>
<dbReference type="PANTHER" id="PTHR14200">
    <property type="entry name" value="CYTOCHROME C OXIDASE POLYPEPTIDE"/>
    <property type="match status" value="1"/>
</dbReference>
<dbReference type="PANTHER" id="PTHR14200:SF16">
    <property type="entry name" value="CYTOCHROME C OXIDASE SUBUNIT 5A, MITOCHONDRIAL"/>
    <property type="match status" value="1"/>
</dbReference>
<dbReference type="Pfam" id="PF02284">
    <property type="entry name" value="COX5A"/>
    <property type="match status" value="1"/>
</dbReference>
<dbReference type="SUPFAM" id="SSF48479">
    <property type="entry name" value="Cytochrome c oxidase subunit E"/>
    <property type="match status" value="1"/>
</dbReference>
<accession>B0VYX8</accession>
<comment type="function">
    <text evidence="2">Component of the cytochrome c oxidase, the last enzyme in the mitochondrial electron transport chain which drives oxidative phosphorylation. The respiratory chain contains 3 multisubunit complexes succinate dehydrogenase (complex II, CII), ubiquinol-cytochrome c oxidoreductase (cytochrome b-c1 complex, complex III, CIII) and cytochrome c oxidase (complex IV, CIV), that cooperate to transfer electrons derived from NADH and succinate to molecular oxygen, creating an electrochemical gradient over the inner membrane that drives transmembrane transport and the ATP synthase. Cytochrome c oxidase is the component of the respiratory chain that catalyzes the reduction of oxygen to water. Electrons originating from reduced cytochrome c in the intermembrane space (IMS) are transferred via the dinuclear copper A center (CU(A)) of subunit 2 and heme A of subunit 1 to the active site in subunit 1, a binuclear center (BNC) formed by heme A3 and copper B (CU(B)). The BNC reduces molecular oxygen to 2 water molecules using 4 electrons from cytochrome c in the IMS and 4 protons from the mitochondrial matrix.</text>
</comment>
<comment type="pathway">
    <text evidence="2">Energy metabolism; oxidative phosphorylation.</text>
</comment>
<comment type="subunit">
    <text evidence="1 4">Component of the cytochrome c oxidase (complex IV, CIV), a multisubunit enzyme composed of 14 subunits. The complex is composed of a catalytic core of 3 subunits MT-CO1, MT-CO2 and MT-CO3, encoded in the mitochondrial DNA, and 11 supernumerary subunits COX4I, COX5A, COX5B, COX6A, COX6B, COX6C, COX7A, COX7B, COX7C, COX8 and NDUFA4, which are encoded in the nuclear genome. The complex exists as a monomer or a dimer and forms supercomplexes (SCs) in the inner mitochondrial membrane with NADH-ubiquinone oxidoreductase (complex I, CI) and ubiquinol-cytochrome c oxidoreductase (cytochrome b-c1 complex, complex III, CIII), resulting in different assemblies (supercomplex SCI(1)III(2)IV(1) and megacomplex MCI(2)III(2)IV(2)) (By similarity). Interacts with AFG1L (By similarity). Interacts with RAB5IF (By similarity).</text>
</comment>
<comment type="subcellular location">
    <subcellularLocation>
        <location evidence="1">Mitochondrion inner membrane</location>
        <topology evidence="1">Peripheral membrane protein</topology>
        <orientation evidence="1">Matrix side</orientation>
    </subcellularLocation>
</comment>
<comment type="PTM">
    <text evidence="4">In response to mitochondrial stress, the precursor protein is ubiquitinated by the SIFI complex in the cytoplasm before mitochondrial import, leading to its degradation. Within the SIFI complex, UBR4 initiates ubiquitin chain that are further elongated or branched by KCMF1.</text>
</comment>
<comment type="similarity">
    <text evidence="5">Belongs to the cytochrome c oxidase subunit 5A family.</text>
</comment>
<keyword id="KW-0007">Acetylation</keyword>
<keyword id="KW-0349">Heme</keyword>
<keyword id="KW-0408">Iron</keyword>
<keyword id="KW-0472">Membrane</keyword>
<keyword id="KW-0479">Metal-binding</keyword>
<keyword id="KW-0496">Mitochondrion</keyword>
<keyword id="KW-0999">Mitochondrion inner membrane</keyword>
<keyword id="KW-0597">Phosphoprotein</keyword>
<keyword id="KW-1185">Reference proteome</keyword>
<keyword id="KW-0809">Transit peptide</keyword>
<keyword id="KW-0832">Ubl conjugation</keyword>
<sequence>MLGAALRRCAVAATTWAGPRGLLHSARTPGPAAAIQSVRCYSHGSYETDEEFDARWVTYFNKPDIDAWELRKGINTLATYDLVPEPKIIDAALRACRRLNDFASTVRILEAVKDKAGPHKEIYPYVIQELRPTLNELGISTPEELGLDKV</sequence>